<protein>
    <recommendedName>
        <fullName evidence="1">Large ribosomal subunit protein bL17</fullName>
    </recommendedName>
    <alternativeName>
        <fullName evidence="2">50S ribosomal protein L17</fullName>
    </alternativeName>
</protein>
<evidence type="ECO:0000255" key="1">
    <source>
        <dbReference type="HAMAP-Rule" id="MF_01368"/>
    </source>
</evidence>
<evidence type="ECO:0000305" key="2"/>
<sequence length="122" mass="13748">MGYRKLGRTSDQRKAMLRDLATSLIISERIETTEARAKEVRSVVEKLITLGKKGDLASRRNAAKTLRNVEILNEDETTQTALQKLFGEIAERYTERQGGYTRILKQGPRRGDGAESVIIELV</sequence>
<keyword id="KW-0687">Ribonucleoprotein</keyword>
<keyword id="KW-0689">Ribosomal protein</keyword>
<proteinExistence type="inferred from homology"/>
<name>RL17_STAA3</name>
<feature type="chain" id="PRO_1000055949" description="Large ribosomal subunit protein bL17">
    <location>
        <begin position="1"/>
        <end position="122"/>
    </location>
</feature>
<comment type="subunit">
    <text evidence="1">Part of the 50S ribosomal subunit. Contacts protein L32.</text>
</comment>
<comment type="similarity">
    <text evidence="1">Belongs to the bacterial ribosomal protein bL17 family.</text>
</comment>
<dbReference type="EMBL" id="CP000255">
    <property type="protein sequence ID" value="ABD22159.1"/>
    <property type="molecule type" value="Genomic_DNA"/>
</dbReference>
<dbReference type="RefSeq" id="WP_000542274.1">
    <property type="nucleotide sequence ID" value="NZ_CP027476.1"/>
</dbReference>
<dbReference type="SMR" id="Q2FER6"/>
<dbReference type="GeneID" id="98346535"/>
<dbReference type="KEGG" id="saa:SAUSA300_2177"/>
<dbReference type="HOGENOM" id="CLU_074407_2_2_9"/>
<dbReference type="OMA" id="EHKRINT"/>
<dbReference type="Proteomes" id="UP000001939">
    <property type="component" value="Chromosome"/>
</dbReference>
<dbReference type="GO" id="GO:0022625">
    <property type="term" value="C:cytosolic large ribosomal subunit"/>
    <property type="evidence" value="ECO:0007669"/>
    <property type="project" value="TreeGrafter"/>
</dbReference>
<dbReference type="GO" id="GO:0003735">
    <property type="term" value="F:structural constituent of ribosome"/>
    <property type="evidence" value="ECO:0007669"/>
    <property type="project" value="InterPro"/>
</dbReference>
<dbReference type="GO" id="GO:0006412">
    <property type="term" value="P:translation"/>
    <property type="evidence" value="ECO:0007669"/>
    <property type="project" value="UniProtKB-UniRule"/>
</dbReference>
<dbReference type="FunFam" id="3.90.1030.10:FF:000002">
    <property type="entry name" value="50S ribosomal protein L17"/>
    <property type="match status" value="1"/>
</dbReference>
<dbReference type="Gene3D" id="3.90.1030.10">
    <property type="entry name" value="Ribosomal protein L17"/>
    <property type="match status" value="1"/>
</dbReference>
<dbReference type="HAMAP" id="MF_01368">
    <property type="entry name" value="Ribosomal_bL17"/>
    <property type="match status" value="1"/>
</dbReference>
<dbReference type="InterPro" id="IPR000456">
    <property type="entry name" value="Ribosomal_bL17"/>
</dbReference>
<dbReference type="InterPro" id="IPR047859">
    <property type="entry name" value="Ribosomal_bL17_CS"/>
</dbReference>
<dbReference type="InterPro" id="IPR036373">
    <property type="entry name" value="Ribosomal_bL17_sf"/>
</dbReference>
<dbReference type="NCBIfam" id="TIGR00059">
    <property type="entry name" value="L17"/>
    <property type="match status" value="1"/>
</dbReference>
<dbReference type="PANTHER" id="PTHR14413:SF16">
    <property type="entry name" value="LARGE RIBOSOMAL SUBUNIT PROTEIN BL17M"/>
    <property type="match status" value="1"/>
</dbReference>
<dbReference type="PANTHER" id="PTHR14413">
    <property type="entry name" value="RIBOSOMAL PROTEIN L17"/>
    <property type="match status" value="1"/>
</dbReference>
<dbReference type="Pfam" id="PF01196">
    <property type="entry name" value="Ribosomal_L17"/>
    <property type="match status" value="1"/>
</dbReference>
<dbReference type="SUPFAM" id="SSF64263">
    <property type="entry name" value="Prokaryotic ribosomal protein L17"/>
    <property type="match status" value="1"/>
</dbReference>
<dbReference type="PROSITE" id="PS01167">
    <property type="entry name" value="RIBOSOMAL_L17"/>
    <property type="match status" value="1"/>
</dbReference>
<reference key="1">
    <citation type="journal article" date="2006" name="Lancet">
        <title>Complete genome sequence of USA300, an epidemic clone of community-acquired meticillin-resistant Staphylococcus aureus.</title>
        <authorList>
            <person name="Diep B.A."/>
            <person name="Gill S.R."/>
            <person name="Chang R.F."/>
            <person name="Phan T.H."/>
            <person name="Chen J.H."/>
            <person name="Davidson M.G."/>
            <person name="Lin F."/>
            <person name="Lin J."/>
            <person name="Carleton H.A."/>
            <person name="Mongodin E.F."/>
            <person name="Sensabaugh G.F."/>
            <person name="Perdreau-Remington F."/>
        </authorList>
    </citation>
    <scope>NUCLEOTIDE SEQUENCE [LARGE SCALE GENOMIC DNA]</scope>
    <source>
        <strain>USA300</strain>
    </source>
</reference>
<organism>
    <name type="scientific">Staphylococcus aureus (strain USA300)</name>
    <dbReference type="NCBI Taxonomy" id="367830"/>
    <lineage>
        <taxon>Bacteria</taxon>
        <taxon>Bacillati</taxon>
        <taxon>Bacillota</taxon>
        <taxon>Bacilli</taxon>
        <taxon>Bacillales</taxon>
        <taxon>Staphylococcaceae</taxon>
        <taxon>Staphylococcus</taxon>
    </lineage>
</organism>
<accession>Q2FER6</accession>
<gene>
    <name evidence="1" type="primary">rplQ</name>
    <name type="ordered locus">SAUSA300_2177</name>
</gene>